<name>CH60_METBF</name>
<gene>
    <name evidence="1" type="primary">groEL</name>
    <name evidence="1" type="synonym">groL</name>
    <name type="ordered locus">Mbar_A1543</name>
</gene>
<comment type="function">
    <text evidence="1">Together with its co-chaperonin GroES, plays an essential role in assisting protein folding. The GroEL-GroES system forms a nano-cage that allows encapsulation of the non-native substrate proteins and provides a physical environment optimized to promote and accelerate protein folding.</text>
</comment>
<comment type="catalytic activity">
    <reaction evidence="1">
        <text>ATP + H2O + a folded polypeptide = ADP + phosphate + an unfolded polypeptide.</text>
        <dbReference type="EC" id="5.6.1.7"/>
    </reaction>
</comment>
<comment type="subunit">
    <text evidence="1">Forms a cylinder of 14 subunits composed of two heptameric rings stacked back-to-back. Interacts with the co-chaperonin GroES.</text>
</comment>
<comment type="subcellular location">
    <subcellularLocation>
        <location evidence="1">Cytoplasm</location>
    </subcellularLocation>
</comment>
<comment type="similarity">
    <text evidence="1">Belongs to the chaperonin (HSP60) family.</text>
</comment>
<organism>
    <name type="scientific">Methanosarcina barkeri (strain Fusaro / DSM 804)</name>
    <dbReference type="NCBI Taxonomy" id="269797"/>
    <lineage>
        <taxon>Archaea</taxon>
        <taxon>Methanobacteriati</taxon>
        <taxon>Methanobacteriota</taxon>
        <taxon>Stenosarchaea group</taxon>
        <taxon>Methanomicrobia</taxon>
        <taxon>Methanosarcinales</taxon>
        <taxon>Methanosarcinaceae</taxon>
        <taxon>Methanosarcina</taxon>
    </lineage>
</organism>
<keyword id="KW-0067">ATP-binding</keyword>
<keyword id="KW-0143">Chaperone</keyword>
<keyword id="KW-0963">Cytoplasm</keyword>
<keyword id="KW-0413">Isomerase</keyword>
<keyword id="KW-0547">Nucleotide-binding</keyword>
<accession>Q46CA1</accession>
<dbReference type="EC" id="5.6.1.7" evidence="1"/>
<dbReference type="EMBL" id="CP000099">
    <property type="protein sequence ID" value="AAZ70491.1"/>
    <property type="molecule type" value="Genomic_DNA"/>
</dbReference>
<dbReference type="SMR" id="Q46CA1"/>
<dbReference type="STRING" id="269797.Mbar_A1543"/>
<dbReference type="PaxDb" id="269797-Mbar_A1543"/>
<dbReference type="KEGG" id="mba:Mbar_A1543"/>
<dbReference type="eggNOG" id="arCOG05154">
    <property type="taxonomic scope" value="Archaea"/>
</dbReference>
<dbReference type="HOGENOM" id="CLU_016503_3_0_2"/>
<dbReference type="OrthoDB" id="106945at2157"/>
<dbReference type="GO" id="GO:0005737">
    <property type="term" value="C:cytoplasm"/>
    <property type="evidence" value="ECO:0007669"/>
    <property type="project" value="UniProtKB-SubCell"/>
</dbReference>
<dbReference type="GO" id="GO:0005524">
    <property type="term" value="F:ATP binding"/>
    <property type="evidence" value="ECO:0007669"/>
    <property type="project" value="UniProtKB-UniRule"/>
</dbReference>
<dbReference type="GO" id="GO:0140662">
    <property type="term" value="F:ATP-dependent protein folding chaperone"/>
    <property type="evidence" value="ECO:0007669"/>
    <property type="project" value="InterPro"/>
</dbReference>
<dbReference type="GO" id="GO:0016853">
    <property type="term" value="F:isomerase activity"/>
    <property type="evidence" value="ECO:0007669"/>
    <property type="project" value="UniProtKB-KW"/>
</dbReference>
<dbReference type="GO" id="GO:0051082">
    <property type="term" value="F:unfolded protein binding"/>
    <property type="evidence" value="ECO:0007669"/>
    <property type="project" value="UniProtKB-UniRule"/>
</dbReference>
<dbReference type="GO" id="GO:0042026">
    <property type="term" value="P:protein refolding"/>
    <property type="evidence" value="ECO:0007669"/>
    <property type="project" value="UniProtKB-UniRule"/>
</dbReference>
<dbReference type="CDD" id="cd03344">
    <property type="entry name" value="GroEL"/>
    <property type="match status" value="1"/>
</dbReference>
<dbReference type="FunFam" id="3.50.7.10:FF:000001">
    <property type="entry name" value="60 kDa chaperonin"/>
    <property type="match status" value="1"/>
</dbReference>
<dbReference type="Gene3D" id="3.50.7.10">
    <property type="entry name" value="GroEL"/>
    <property type="match status" value="1"/>
</dbReference>
<dbReference type="Gene3D" id="1.10.560.10">
    <property type="entry name" value="GroEL-like equatorial domain"/>
    <property type="match status" value="1"/>
</dbReference>
<dbReference type="Gene3D" id="3.30.260.10">
    <property type="entry name" value="TCP-1-like chaperonin intermediate domain"/>
    <property type="match status" value="1"/>
</dbReference>
<dbReference type="HAMAP" id="MF_00600">
    <property type="entry name" value="CH60"/>
    <property type="match status" value="1"/>
</dbReference>
<dbReference type="InterPro" id="IPR018370">
    <property type="entry name" value="Chaperonin_Cpn60_CS"/>
</dbReference>
<dbReference type="InterPro" id="IPR001844">
    <property type="entry name" value="Cpn60/GroEL"/>
</dbReference>
<dbReference type="InterPro" id="IPR002423">
    <property type="entry name" value="Cpn60/GroEL/TCP-1"/>
</dbReference>
<dbReference type="InterPro" id="IPR027409">
    <property type="entry name" value="GroEL-like_apical_dom_sf"/>
</dbReference>
<dbReference type="InterPro" id="IPR027413">
    <property type="entry name" value="GROEL-like_equatorial_sf"/>
</dbReference>
<dbReference type="InterPro" id="IPR027410">
    <property type="entry name" value="TCP-1-like_intermed_sf"/>
</dbReference>
<dbReference type="NCBIfam" id="TIGR02348">
    <property type="entry name" value="GroEL"/>
    <property type="match status" value="1"/>
</dbReference>
<dbReference type="NCBIfam" id="NF000592">
    <property type="entry name" value="PRK00013.1"/>
    <property type="match status" value="1"/>
</dbReference>
<dbReference type="NCBIfam" id="NF009487">
    <property type="entry name" value="PRK12849.1"/>
    <property type="match status" value="1"/>
</dbReference>
<dbReference type="NCBIfam" id="NF009488">
    <property type="entry name" value="PRK12850.1"/>
    <property type="match status" value="1"/>
</dbReference>
<dbReference type="NCBIfam" id="NF009489">
    <property type="entry name" value="PRK12851.1"/>
    <property type="match status" value="1"/>
</dbReference>
<dbReference type="PANTHER" id="PTHR45633">
    <property type="entry name" value="60 KDA HEAT SHOCK PROTEIN, MITOCHONDRIAL"/>
    <property type="match status" value="1"/>
</dbReference>
<dbReference type="Pfam" id="PF00118">
    <property type="entry name" value="Cpn60_TCP1"/>
    <property type="match status" value="1"/>
</dbReference>
<dbReference type="PRINTS" id="PR00298">
    <property type="entry name" value="CHAPERONIN60"/>
</dbReference>
<dbReference type="SUPFAM" id="SSF52029">
    <property type="entry name" value="GroEL apical domain-like"/>
    <property type="match status" value="1"/>
</dbReference>
<dbReference type="SUPFAM" id="SSF48592">
    <property type="entry name" value="GroEL equatorial domain-like"/>
    <property type="match status" value="1"/>
</dbReference>
<dbReference type="SUPFAM" id="SSF54849">
    <property type="entry name" value="GroEL-intermediate domain like"/>
    <property type="match status" value="1"/>
</dbReference>
<dbReference type="PROSITE" id="PS00296">
    <property type="entry name" value="CHAPERONINS_CPN60"/>
    <property type="match status" value="1"/>
</dbReference>
<sequence length="536" mass="57927">MASKQIMFDENARKALLNGVDKVANTVKITLGPKGRYVVLDKSTKPVVTNDGVTIAKEIELHDKFENMGAKLVKEVASKTQDNTGDGTTTATLLAQSMIREGLKNISAGANPIDVKKGIEMATENVVGYLKSKSSEVKGKEKIVQVATVSANNDEEIGNLIADAMERVGYNGVITVEDSKTMETNLDVVEGMQFDRGFVSPYMATDSEKMVCEFEDPYILITDKKINSMKQIVPVLEKVASEGRSLLIIAEDVDGDAQAALILNIIRGALRVCAVKAPGFGNERKEMLEDIAVLTGGQVISEDKGMKLEEFDDYMLGSARKVTIDNNKTIIVEGKGDKAKIKERVSLIEAQINIADVEYKKTELKKRQAKLGGGVAVIKVGAATETELKEKKMRIDDALNATKAAVEEGVVIGGGISLFRAAAILDSLKLEGDREIGVKIVQRAIEEPVRQIAENAGKEGAEVVATIRAEPRELFGYNAKKDVFEDLFEAGVIDPTKVVRSGLQNAASIAGMVLTTEALVTDFNDEKDEKAATIII</sequence>
<evidence type="ECO:0000255" key="1">
    <source>
        <dbReference type="HAMAP-Rule" id="MF_00600"/>
    </source>
</evidence>
<feature type="chain" id="PRO_0000257024" description="Chaperonin GroEL">
    <location>
        <begin position="1"/>
        <end position="536"/>
    </location>
</feature>
<feature type="binding site" evidence="1">
    <location>
        <begin position="30"/>
        <end position="33"/>
    </location>
    <ligand>
        <name>ATP</name>
        <dbReference type="ChEBI" id="CHEBI:30616"/>
    </ligand>
</feature>
<feature type="binding site" evidence="1">
    <location>
        <begin position="86"/>
        <end position="90"/>
    </location>
    <ligand>
        <name>ATP</name>
        <dbReference type="ChEBI" id="CHEBI:30616"/>
    </ligand>
</feature>
<feature type="binding site" evidence="1">
    <location>
        <position position="414"/>
    </location>
    <ligand>
        <name>ATP</name>
        <dbReference type="ChEBI" id="CHEBI:30616"/>
    </ligand>
</feature>
<feature type="binding site" evidence="1">
    <location>
        <position position="494"/>
    </location>
    <ligand>
        <name>ATP</name>
        <dbReference type="ChEBI" id="CHEBI:30616"/>
    </ligand>
</feature>
<reference key="1">
    <citation type="journal article" date="2006" name="J. Bacteriol.">
        <title>The Methanosarcina barkeri genome: comparative analysis with Methanosarcina acetivorans and Methanosarcina mazei reveals extensive rearrangement within methanosarcinal genomes.</title>
        <authorList>
            <person name="Maeder D.L."/>
            <person name="Anderson I."/>
            <person name="Brettin T.S."/>
            <person name="Bruce D.C."/>
            <person name="Gilna P."/>
            <person name="Han C.S."/>
            <person name="Lapidus A."/>
            <person name="Metcalf W.W."/>
            <person name="Saunders E."/>
            <person name="Tapia R."/>
            <person name="Sowers K.R."/>
        </authorList>
    </citation>
    <scope>NUCLEOTIDE SEQUENCE [LARGE SCALE GENOMIC DNA]</scope>
    <source>
        <strain>Fusaro / DSM 804</strain>
    </source>
</reference>
<protein>
    <recommendedName>
        <fullName evidence="1">Chaperonin GroEL</fullName>
        <ecNumber evidence="1">5.6.1.7</ecNumber>
    </recommendedName>
    <alternativeName>
        <fullName evidence="1">60 kDa chaperonin</fullName>
    </alternativeName>
    <alternativeName>
        <fullName evidence="1">Chaperonin-60</fullName>
        <shortName evidence="1">Cpn60</shortName>
    </alternativeName>
</protein>
<proteinExistence type="inferred from homology"/>